<proteinExistence type="evidence at protein level"/>
<organism>
    <name type="scientific">Leishmania major</name>
    <dbReference type="NCBI Taxonomy" id="5664"/>
    <lineage>
        <taxon>Eukaryota</taxon>
        <taxon>Discoba</taxon>
        <taxon>Euglenozoa</taxon>
        <taxon>Kinetoplastea</taxon>
        <taxon>Metakinetoplastina</taxon>
        <taxon>Trypanosomatida</taxon>
        <taxon>Trypanosomatidae</taxon>
        <taxon>Leishmaniinae</taxon>
        <taxon>Leishmania</taxon>
    </lineage>
</organism>
<accession>P48157</accession>
<accession>Q7K6M4</accession>
<comment type="function">
    <text evidence="1">Component of the ribosome, a large ribonucleoprotein complex responsible for the synthesis of proteins in the cell. The small ribosomal subunit (SSU) binds messenger RNAs (mRNAs) and translates the encoded message by selecting cognate aminoacyl-transfer RNA (tRNA) molecules. The large subunit (LSU) contains the ribosomal catalytic site termed the peptidyl transferase center (PTC), which catalyzes the formation of peptide bonds, thereby polymerizing the amino acids delivered by tRNAs into a polypeptide chain. The nascent polypeptides leave the ribosome through a tunnel in the LSU and interact with protein factors that function in enzymatic processing, targeting, and the membrane insertion of nascent chains at the exit of the ribosomal tunnel.</text>
</comment>
<comment type="subunit">
    <text evidence="1">Component of the large ribosomal subunit.</text>
</comment>
<comment type="subcellular location">
    <subcellularLocation>
        <location evidence="1">Nucleus</location>
    </subcellularLocation>
    <subcellularLocation>
        <location evidence="1">Cytoplasm</location>
    </subcellularLocation>
</comment>
<comment type="similarity">
    <text evidence="2">Belongs to the universal ribosomal protein uL5 family.</text>
</comment>
<feature type="chain" id="PRO_0000125092" description="Large ribosomal subunit protein uL5">
    <location>
        <begin position="1"/>
        <end position="188"/>
    </location>
</feature>
<name>RL11_LEIMA</name>
<dbReference type="EMBL" id="U16999">
    <property type="protein sequence ID" value="AAC46922.1"/>
    <property type="molecule type" value="Genomic_DNA"/>
</dbReference>
<dbReference type="EMBL" id="FR796400">
    <property type="protein sequence ID" value="CAC22698.1"/>
    <property type="molecule type" value="Genomic_DNA"/>
</dbReference>
<dbReference type="EMBL" id="FR796418">
    <property type="protein sequence ID" value="CAJ03765.1"/>
    <property type="molecule type" value="Genomic_DNA"/>
</dbReference>
<dbReference type="RefSeq" id="XP_001683157.1">
    <property type="nucleotide sequence ID" value="XM_001683105.1"/>
</dbReference>
<dbReference type="RefSeq" id="XP_888578.1">
    <property type="nucleotide sequence ID" value="XM_883485.1"/>
</dbReference>
<dbReference type="PDB" id="8A3W">
    <property type="method" value="EM"/>
    <property type="resolution" value="2.89 A"/>
    <property type="chains" value="D=1-188"/>
</dbReference>
<dbReference type="PDB" id="8A98">
    <property type="method" value="EM"/>
    <property type="resolution" value="2.46 A"/>
    <property type="chains" value="D=1-188"/>
</dbReference>
<dbReference type="PDB" id="8OVJ">
    <property type="method" value="EM"/>
    <property type="resolution" value="2.40 A"/>
    <property type="chains" value="D=1-188"/>
</dbReference>
<dbReference type="PDB" id="8QHU">
    <property type="method" value="EM"/>
    <property type="resolution" value="2.72 A"/>
    <property type="chains" value="D=1-188"/>
</dbReference>
<dbReference type="PDB" id="8QIE">
    <property type="method" value="EM"/>
    <property type="resolution" value="2.43 A"/>
    <property type="chains" value="D=1-188"/>
</dbReference>
<dbReference type="PDB" id="8RXH">
    <property type="method" value="EM"/>
    <property type="resolution" value="2.93 A"/>
    <property type="chains" value="LD=1-188"/>
</dbReference>
<dbReference type="PDB" id="8RXX">
    <property type="method" value="EM"/>
    <property type="resolution" value="2.97 A"/>
    <property type="chains" value="LD=1-188"/>
</dbReference>
<dbReference type="PDBsum" id="8A3W"/>
<dbReference type="PDBsum" id="8A98"/>
<dbReference type="PDBsum" id="8OVJ"/>
<dbReference type="PDBsum" id="8QHU"/>
<dbReference type="PDBsum" id="8QIE"/>
<dbReference type="PDBsum" id="8RXH"/>
<dbReference type="PDBsum" id="8RXX"/>
<dbReference type="EMDB" id="EMD-15124"/>
<dbReference type="EMDB" id="EMD-15272"/>
<dbReference type="EMDB" id="EMD-17216"/>
<dbReference type="EMDB" id="EMD-18419"/>
<dbReference type="EMDB" id="EMD-18437"/>
<dbReference type="EMDB" id="EMD-19576"/>
<dbReference type="EMDB" id="EMD-19582"/>
<dbReference type="SMR" id="P48157"/>
<dbReference type="FunCoup" id="P48157">
    <property type="interactions" value="277"/>
</dbReference>
<dbReference type="STRING" id="5664.P48157"/>
<dbReference type="EnsemblProtists" id="CAC22698">
    <property type="protein sequence ID" value="CAC22698"/>
    <property type="gene ID" value="LMJF_04_0470"/>
</dbReference>
<dbReference type="EnsemblProtists" id="CAJ03765">
    <property type="protein sequence ID" value="CAJ03765"/>
    <property type="gene ID" value="LMJF_22_0030"/>
</dbReference>
<dbReference type="GeneID" id="5651769"/>
<dbReference type="KEGG" id="lma:LMJF_04_0470"/>
<dbReference type="KEGG" id="lma:LMJF_22_0030"/>
<dbReference type="VEuPathDB" id="TriTrypDB:LmjF.22.0030"/>
<dbReference type="VEuPathDB" id="TriTrypDB:LMJFC_220005800"/>
<dbReference type="VEuPathDB" id="TriTrypDB:LMJLV39_220005200"/>
<dbReference type="VEuPathDB" id="TriTrypDB:LMJSD75_220005300"/>
<dbReference type="eggNOG" id="KOG0397">
    <property type="taxonomic scope" value="Eukaryota"/>
</dbReference>
<dbReference type="InParanoid" id="P48157"/>
<dbReference type="OMA" id="NPMKELK"/>
<dbReference type="Proteomes" id="UP000000542">
    <property type="component" value="Chromosome 22"/>
</dbReference>
<dbReference type="Proteomes" id="UP000000542">
    <property type="component" value="Chromosome 4"/>
</dbReference>
<dbReference type="GO" id="GO:0022625">
    <property type="term" value="C:cytosolic large ribosomal subunit"/>
    <property type="evidence" value="ECO:0000318"/>
    <property type="project" value="GO_Central"/>
</dbReference>
<dbReference type="GO" id="GO:0005634">
    <property type="term" value="C:nucleus"/>
    <property type="evidence" value="ECO:0007669"/>
    <property type="project" value="UniProtKB-SubCell"/>
</dbReference>
<dbReference type="GO" id="GO:0003723">
    <property type="term" value="F:RNA binding"/>
    <property type="evidence" value="ECO:0000318"/>
    <property type="project" value="GO_Central"/>
</dbReference>
<dbReference type="GO" id="GO:0019843">
    <property type="term" value="F:rRNA binding"/>
    <property type="evidence" value="ECO:0007669"/>
    <property type="project" value="UniProtKB-KW"/>
</dbReference>
<dbReference type="GO" id="GO:0003735">
    <property type="term" value="F:structural constituent of ribosome"/>
    <property type="evidence" value="ECO:0000318"/>
    <property type="project" value="GO_Central"/>
</dbReference>
<dbReference type="GO" id="GO:0006412">
    <property type="term" value="P:translation"/>
    <property type="evidence" value="ECO:0000318"/>
    <property type="project" value="GO_Central"/>
</dbReference>
<dbReference type="FunFam" id="3.30.1440.10:FF:000004">
    <property type="entry name" value="60S ribosomal protein L11, putative"/>
    <property type="match status" value="1"/>
</dbReference>
<dbReference type="Gene3D" id="3.30.1440.10">
    <property type="match status" value="1"/>
</dbReference>
<dbReference type="InterPro" id="IPR002132">
    <property type="entry name" value="Ribosomal_uL5"/>
</dbReference>
<dbReference type="InterPro" id="IPR031309">
    <property type="entry name" value="Ribosomal_uL5_C"/>
</dbReference>
<dbReference type="InterPro" id="IPR020929">
    <property type="entry name" value="Ribosomal_uL5_CS"/>
</dbReference>
<dbReference type="InterPro" id="IPR022803">
    <property type="entry name" value="Ribosomal_uL5_dom_sf"/>
</dbReference>
<dbReference type="InterPro" id="IPR031310">
    <property type="entry name" value="Ribosomal_uL5_N"/>
</dbReference>
<dbReference type="NCBIfam" id="NF003258">
    <property type="entry name" value="PRK04219.1"/>
    <property type="match status" value="1"/>
</dbReference>
<dbReference type="PANTHER" id="PTHR11994">
    <property type="entry name" value="60S RIBOSOMAL PROTEIN L11-RELATED"/>
    <property type="match status" value="1"/>
</dbReference>
<dbReference type="Pfam" id="PF00281">
    <property type="entry name" value="Ribosomal_L5"/>
    <property type="match status" value="1"/>
</dbReference>
<dbReference type="Pfam" id="PF00673">
    <property type="entry name" value="Ribosomal_L5_C"/>
    <property type="match status" value="1"/>
</dbReference>
<dbReference type="PIRSF" id="PIRSF002161">
    <property type="entry name" value="Ribosomal_L5"/>
    <property type="match status" value="1"/>
</dbReference>
<dbReference type="SUPFAM" id="SSF55282">
    <property type="entry name" value="RL5-like"/>
    <property type="match status" value="1"/>
</dbReference>
<dbReference type="PROSITE" id="PS00358">
    <property type="entry name" value="RIBOSOMAL_L5"/>
    <property type="match status" value="1"/>
</dbReference>
<evidence type="ECO:0000250" key="1">
    <source>
        <dbReference type="UniProtKB" id="P0C0W9"/>
    </source>
</evidence>
<evidence type="ECO:0000305" key="2"/>
<sequence length="188" mass="21645">MVAESKAANPMREIVVKKLCINICVGESGDRLTRASKVLEQLCEQTPVLSRARLTVRTFGIRRNEKIAVHCTVRGKKAEELLEKGLKVKEFELKSYNFADTGSFGFGIDEHIDLGIKYDPSTGIYGMDFYVVLGRRGERVAHRKRKCSRVGHSHHVTKEEAMKWFEKVHDGIIFQAKKKKKMIRRRRR</sequence>
<keyword id="KW-0002">3D-structure</keyword>
<keyword id="KW-0963">Cytoplasm</keyword>
<keyword id="KW-0539">Nucleus</keyword>
<keyword id="KW-1185">Reference proteome</keyword>
<keyword id="KW-0687">Ribonucleoprotein</keyword>
<keyword id="KW-0689">Ribosomal protein</keyword>
<keyword id="KW-0694">RNA-binding</keyword>
<keyword id="KW-0699">rRNA-binding</keyword>
<reference key="1">
    <citation type="journal article" date="1995" name="Mol. Biochem. Parasitol.">
        <title>Cloning and characterization of the ribosomal l11 gene from Leishmania spp.</title>
        <authorList>
            <person name="Love D.C."/>
            <person name="Wilson M.E."/>
            <person name="Mosser D.M."/>
        </authorList>
    </citation>
    <scope>NUCLEOTIDE SEQUENCE [GENOMIC DNA]</scope>
    <source>
        <strain>NIH S</strain>
    </source>
</reference>
<reference key="2">
    <citation type="journal article" date="1998" name="Genome Res.">
        <title>A physical map of the Leishmania major Friedlin genome.</title>
        <authorList>
            <person name="Ivens A.C."/>
            <person name="Lewis S.M."/>
            <person name="Bagherzadeh A."/>
            <person name="Zhang L."/>
            <person name="Chan H.M."/>
            <person name="Smith D.F."/>
        </authorList>
    </citation>
    <scope>NUCLEOTIDE SEQUENCE [GENOMIC DNA]</scope>
</reference>
<reference key="3">
    <citation type="journal article" date="2005" name="Science">
        <title>The genome of the kinetoplastid parasite, Leishmania major.</title>
        <authorList>
            <person name="Ivens A.C."/>
            <person name="Peacock C.S."/>
            <person name="Worthey E.A."/>
            <person name="Murphy L."/>
            <person name="Aggarwal G."/>
            <person name="Berriman M."/>
            <person name="Sisk E."/>
            <person name="Rajandream M.A."/>
            <person name="Adlem E."/>
            <person name="Aert R."/>
            <person name="Anupama A."/>
            <person name="Apostolou Z."/>
            <person name="Attipoe P."/>
            <person name="Bason N."/>
            <person name="Bauser C."/>
            <person name="Beck A."/>
            <person name="Beverley S.M."/>
            <person name="Bianchettin G."/>
            <person name="Borzym K."/>
            <person name="Bothe G."/>
            <person name="Bruschi C.V."/>
            <person name="Collins M."/>
            <person name="Cadag E."/>
            <person name="Ciarloni L."/>
            <person name="Clayton C."/>
            <person name="Coulson R.M.R."/>
            <person name="Cronin A."/>
            <person name="Cruz A.K."/>
            <person name="Davies R.M."/>
            <person name="De Gaudenzi J."/>
            <person name="Dobson D.E."/>
            <person name="Duesterhoeft A."/>
            <person name="Fazelina G."/>
            <person name="Fosker N."/>
            <person name="Frasch A.C."/>
            <person name="Fraser A."/>
            <person name="Fuchs M."/>
            <person name="Gabel C."/>
            <person name="Goble A."/>
            <person name="Goffeau A."/>
            <person name="Harris D."/>
            <person name="Hertz-Fowler C."/>
            <person name="Hilbert H."/>
            <person name="Horn D."/>
            <person name="Huang Y."/>
            <person name="Klages S."/>
            <person name="Knights A."/>
            <person name="Kube M."/>
            <person name="Larke N."/>
            <person name="Litvin L."/>
            <person name="Lord A."/>
            <person name="Louie T."/>
            <person name="Marra M."/>
            <person name="Masuy D."/>
            <person name="Matthews K."/>
            <person name="Michaeli S."/>
            <person name="Mottram J.C."/>
            <person name="Mueller-Auer S."/>
            <person name="Munden H."/>
            <person name="Nelson S."/>
            <person name="Norbertczak H."/>
            <person name="Oliver K."/>
            <person name="O'neil S."/>
            <person name="Pentony M."/>
            <person name="Pohl T.M."/>
            <person name="Price C."/>
            <person name="Purnelle B."/>
            <person name="Quail M.A."/>
            <person name="Rabbinowitsch E."/>
            <person name="Reinhardt R."/>
            <person name="Rieger M."/>
            <person name="Rinta J."/>
            <person name="Robben J."/>
            <person name="Robertson L."/>
            <person name="Ruiz J.C."/>
            <person name="Rutter S."/>
            <person name="Saunders D."/>
            <person name="Schaefer M."/>
            <person name="Schein J."/>
            <person name="Schwartz D.C."/>
            <person name="Seeger K."/>
            <person name="Seyler A."/>
            <person name="Sharp S."/>
            <person name="Shin H."/>
            <person name="Sivam D."/>
            <person name="Squares R."/>
            <person name="Squares S."/>
            <person name="Tosato V."/>
            <person name="Vogt C."/>
            <person name="Volckaert G."/>
            <person name="Wambutt R."/>
            <person name="Warren T."/>
            <person name="Wedler H."/>
            <person name="Woodward J."/>
            <person name="Zhou S."/>
            <person name="Zimmermann W."/>
            <person name="Smith D.F."/>
            <person name="Blackwell J.M."/>
            <person name="Stuart K.D."/>
            <person name="Barrell B.G."/>
            <person name="Myler P.J."/>
        </authorList>
    </citation>
    <scope>NUCLEOTIDE SEQUENCE [LARGE SCALE GENOMIC DNA]</scope>
    <source>
        <strain>MHOM/IL/81/Friedlin</strain>
    </source>
</reference>
<protein>
    <recommendedName>
        <fullName evidence="2">Large ribosomal subunit protein uL5</fullName>
    </recommendedName>
    <alternativeName>
        <fullName>60S ribosomal protein L11</fullName>
    </alternativeName>
</protein>
<gene>
    <name type="primary">RPL11</name>
    <name type="synonym">P1421.04</name>
    <name type="ORF">LmjF22.0030</name>
</gene>